<feature type="chain" id="PRO_0000377098" description="tRNA dimethylallyltransferase">
    <location>
        <begin position="1"/>
        <end position="324"/>
    </location>
</feature>
<feature type="region of interest" description="Interaction with substrate tRNA" evidence="1">
    <location>
        <begin position="42"/>
        <end position="45"/>
    </location>
</feature>
<feature type="region of interest" description="Interaction with substrate tRNA" evidence="1">
    <location>
        <begin position="166"/>
        <end position="170"/>
    </location>
</feature>
<feature type="region of interest" description="Interaction with substrate tRNA" evidence="1">
    <location>
        <begin position="251"/>
        <end position="256"/>
    </location>
</feature>
<feature type="binding site" evidence="1">
    <location>
        <begin position="17"/>
        <end position="24"/>
    </location>
    <ligand>
        <name>ATP</name>
        <dbReference type="ChEBI" id="CHEBI:30616"/>
    </ligand>
</feature>
<feature type="binding site" evidence="1">
    <location>
        <begin position="19"/>
        <end position="24"/>
    </location>
    <ligand>
        <name>substrate</name>
    </ligand>
</feature>
<feature type="site" description="Interaction with substrate tRNA" evidence="1">
    <location>
        <position position="108"/>
    </location>
</feature>
<feature type="site" description="Interaction with substrate tRNA" evidence="1">
    <location>
        <position position="130"/>
    </location>
</feature>
<sequence length="324" mass="35096">MSERNAASARTVACLLGPTASGKTAAALALAARRPIEIVSVDSALVYRGMDIGTAKPTRDERAAVPHHLIDIVDPADAYSAAEFRADALRLVAQIAARGRTPLLAGGTMLYYRALTQGLNDLPAADPDVRATLDADAARDGWPALHARLAGIDPATAARLAPNDSQRIQRALEVYLLTGQPMSALLAAPPRDDDAAAGLRFVPVALEPSERAVLHARIAARFDAMLEAGFIDEVERLRRRDDLHLGLPSMRCVGYRQAWEYLDGCTDYRTMRDKGIFATRQLCKRQLTWLRAMPERIVVDCCAPDATVRAVDALERVLDGRAPA</sequence>
<gene>
    <name evidence="1" type="primary">miaA</name>
    <name type="ordered locus">BURPS1710b_3309</name>
</gene>
<reference key="1">
    <citation type="journal article" date="2010" name="Genome Biol. Evol.">
        <title>Continuing evolution of Burkholderia mallei through genome reduction and large-scale rearrangements.</title>
        <authorList>
            <person name="Losada L."/>
            <person name="Ronning C.M."/>
            <person name="DeShazer D."/>
            <person name="Woods D."/>
            <person name="Fedorova N."/>
            <person name="Kim H.S."/>
            <person name="Shabalina S.A."/>
            <person name="Pearson T.R."/>
            <person name="Brinkac L."/>
            <person name="Tan P."/>
            <person name="Nandi T."/>
            <person name="Crabtree J."/>
            <person name="Badger J."/>
            <person name="Beckstrom-Sternberg S."/>
            <person name="Saqib M."/>
            <person name="Schutzer S.E."/>
            <person name="Keim P."/>
            <person name="Nierman W.C."/>
        </authorList>
    </citation>
    <scope>NUCLEOTIDE SEQUENCE [LARGE SCALE GENOMIC DNA]</scope>
    <source>
        <strain>1710b</strain>
    </source>
</reference>
<dbReference type="EC" id="2.5.1.75" evidence="1"/>
<dbReference type="EMBL" id="CP000124">
    <property type="protein sequence ID" value="ABA48534.1"/>
    <property type="status" value="ALT_INIT"/>
    <property type="molecule type" value="Genomic_DNA"/>
</dbReference>
<dbReference type="RefSeq" id="WP_004527674.1">
    <property type="nucleotide sequence ID" value="NC_007434.1"/>
</dbReference>
<dbReference type="SMR" id="Q3JP23"/>
<dbReference type="EnsemblBacteria" id="ABA48534">
    <property type="protein sequence ID" value="ABA48534"/>
    <property type="gene ID" value="BURPS1710b_3309"/>
</dbReference>
<dbReference type="KEGG" id="bpm:BURPS1710b_3309"/>
<dbReference type="HOGENOM" id="CLU_032616_0_0_4"/>
<dbReference type="Proteomes" id="UP000002700">
    <property type="component" value="Chromosome I"/>
</dbReference>
<dbReference type="GO" id="GO:0005524">
    <property type="term" value="F:ATP binding"/>
    <property type="evidence" value="ECO:0007669"/>
    <property type="project" value="UniProtKB-UniRule"/>
</dbReference>
<dbReference type="GO" id="GO:0052381">
    <property type="term" value="F:tRNA dimethylallyltransferase activity"/>
    <property type="evidence" value="ECO:0007669"/>
    <property type="project" value="UniProtKB-UniRule"/>
</dbReference>
<dbReference type="GO" id="GO:0006400">
    <property type="term" value="P:tRNA modification"/>
    <property type="evidence" value="ECO:0007669"/>
    <property type="project" value="TreeGrafter"/>
</dbReference>
<dbReference type="FunFam" id="1.10.20.140:FF:000001">
    <property type="entry name" value="tRNA dimethylallyltransferase"/>
    <property type="match status" value="1"/>
</dbReference>
<dbReference type="Gene3D" id="1.10.20.140">
    <property type="match status" value="1"/>
</dbReference>
<dbReference type="Gene3D" id="3.40.50.300">
    <property type="entry name" value="P-loop containing nucleotide triphosphate hydrolases"/>
    <property type="match status" value="1"/>
</dbReference>
<dbReference type="HAMAP" id="MF_00185">
    <property type="entry name" value="IPP_trans"/>
    <property type="match status" value="1"/>
</dbReference>
<dbReference type="InterPro" id="IPR039657">
    <property type="entry name" value="Dimethylallyltransferase"/>
</dbReference>
<dbReference type="InterPro" id="IPR018022">
    <property type="entry name" value="IPT"/>
</dbReference>
<dbReference type="InterPro" id="IPR027417">
    <property type="entry name" value="P-loop_NTPase"/>
</dbReference>
<dbReference type="NCBIfam" id="TIGR00174">
    <property type="entry name" value="miaA"/>
    <property type="match status" value="1"/>
</dbReference>
<dbReference type="PANTHER" id="PTHR11088">
    <property type="entry name" value="TRNA DIMETHYLALLYLTRANSFERASE"/>
    <property type="match status" value="1"/>
</dbReference>
<dbReference type="PANTHER" id="PTHR11088:SF60">
    <property type="entry name" value="TRNA DIMETHYLALLYLTRANSFERASE"/>
    <property type="match status" value="1"/>
</dbReference>
<dbReference type="Pfam" id="PF01715">
    <property type="entry name" value="IPPT"/>
    <property type="match status" value="1"/>
</dbReference>
<dbReference type="SUPFAM" id="SSF52540">
    <property type="entry name" value="P-loop containing nucleoside triphosphate hydrolases"/>
    <property type="match status" value="2"/>
</dbReference>
<protein>
    <recommendedName>
        <fullName evidence="1">tRNA dimethylallyltransferase</fullName>
        <ecNumber evidence="1">2.5.1.75</ecNumber>
    </recommendedName>
    <alternativeName>
        <fullName evidence="1">Dimethylallyl diphosphate:tRNA dimethylallyltransferase</fullName>
        <shortName evidence="1">DMAPP:tRNA dimethylallyltransferase</shortName>
        <shortName evidence="1">DMATase</shortName>
    </alternativeName>
    <alternativeName>
        <fullName evidence="1">Isopentenyl-diphosphate:tRNA isopentenyltransferase</fullName>
        <shortName evidence="1">IPP transferase</shortName>
        <shortName evidence="1">IPPT</shortName>
        <shortName evidence="1">IPTase</shortName>
    </alternativeName>
</protein>
<proteinExistence type="inferred from homology"/>
<keyword id="KW-0067">ATP-binding</keyword>
<keyword id="KW-0460">Magnesium</keyword>
<keyword id="KW-0547">Nucleotide-binding</keyword>
<keyword id="KW-0808">Transferase</keyword>
<keyword id="KW-0819">tRNA processing</keyword>
<organism>
    <name type="scientific">Burkholderia pseudomallei (strain 1710b)</name>
    <dbReference type="NCBI Taxonomy" id="320372"/>
    <lineage>
        <taxon>Bacteria</taxon>
        <taxon>Pseudomonadati</taxon>
        <taxon>Pseudomonadota</taxon>
        <taxon>Betaproteobacteria</taxon>
        <taxon>Burkholderiales</taxon>
        <taxon>Burkholderiaceae</taxon>
        <taxon>Burkholderia</taxon>
        <taxon>pseudomallei group</taxon>
    </lineage>
</organism>
<evidence type="ECO:0000255" key="1">
    <source>
        <dbReference type="HAMAP-Rule" id="MF_00185"/>
    </source>
</evidence>
<evidence type="ECO:0000305" key="2"/>
<accession>Q3JP23</accession>
<name>MIAA_BURP1</name>
<comment type="function">
    <text evidence="1">Catalyzes the transfer of a dimethylallyl group onto the adenine at position 37 in tRNAs that read codons beginning with uridine, leading to the formation of N6-(dimethylallyl)adenosine (i(6)A).</text>
</comment>
<comment type="catalytic activity">
    <reaction evidence="1">
        <text>adenosine(37) in tRNA + dimethylallyl diphosphate = N(6)-dimethylallyladenosine(37) in tRNA + diphosphate</text>
        <dbReference type="Rhea" id="RHEA:26482"/>
        <dbReference type="Rhea" id="RHEA-COMP:10162"/>
        <dbReference type="Rhea" id="RHEA-COMP:10375"/>
        <dbReference type="ChEBI" id="CHEBI:33019"/>
        <dbReference type="ChEBI" id="CHEBI:57623"/>
        <dbReference type="ChEBI" id="CHEBI:74411"/>
        <dbReference type="ChEBI" id="CHEBI:74415"/>
        <dbReference type="EC" id="2.5.1.75"/>
    </reaction>
</comment>
<comment type="cofactor">
    <cofactor evidence="1">
        <name>Mg(2+)</name>
        <dbReference type="ChEBI" id="CHEBI:18420"/>
    </cofactor>
</comment>
<comment type="subunit">
    <text evidence="1">Monomer.</text>
</comment>
<comment type="similarity">
    <text evidence="1">Belongs to the IPP transferase family.</text>
</comment>
<comment type="sequence caution" evidence="2">
    <conflict type="erroneous initiation">
        <sequence resource="EMBL-CDS" id="ABA48534"/>
    </conflict>
</comment>